<comment type="function">
    <text evidence="1">Chaperone that functions as a gatekeeper on the periplasmic side of the SecYEG translocon. Facilitates the translocation of precursor proteins across SecYEG by interacting with the translocating substrate. Also plays a role in the release of newly synthesized secreted proteins at the periplasmic exit site of the Sec translocon.</text>
</comment>
<comment type="subunit">
    <text evidence="1">Interacts with the SecYEG translocon (By similarity). Binds to the lateral gate of SecY (By similarity). Forms a complex with YfgM (By similarity).</text>
</comment>
<comment type="subcellular location">
    <subcellularLocation>
        <location evidence="1">Cell inner membrane</location>
        <topology evidence="1">Single-pass type II membrane protein</topology>
        <orientation evidence="1">Periplasmic side</orientation>
    </subcellularLocation>
    <text evidence="1">Located at the lateral gate of SecY.</text>
</comment>
<comment type="similarity">
    <text evidence="4">Belongs to the PpiD chaperone family.</text>
</comment>
<dbReference type="EMBL" id="AE017143">
    <property type="protein sequence ID" value="AAP96493.1"/>
    <property type="molecule type" value="Genomic_DNA"/>
</dbReference>
<dbReference type="RefSeq" id="WP_010945522.1">
    <property type="nucleotide sequence ID" value="NC_002940.2"/>
</dbReference>
<dbReference type="SMR" id="Q7VKX4"/>
<dbReference type="STRING" id="233412.HD_1737"/>
<dbReference type="KEGG" id="hdu:HD_1737"/>
<dbReference type="eggNOG" id="COG0760">
    <property type="taxonomic scope" value="Bacteria"/>
</dbReference>
<dbReference type="HOGENOM" id="CLU_023843_1_1_6"/>
<dbReference type="OrthoDB" id="9812372at2"/>
<dbReference type="Proteomes" id="UP000001022">
    <property type="component" value="Chromosome"/>
</dbReference>
<dbReference type="GO" id="GO:0005886">
    <property type="term" value="C:plasma membrane"/>
    <property type="evidence" value="ECO:0007669"/>
    <property type="project" value="UniProtKB-SubCell"/>
</dbReference>
<dbReference type="GO" id="GO:0003755">
    <property type="term" value="F:peptidyl-prolyl cis-trans isomerase activity"/>
    <property type="evidence" value="ECO:0007669"/>
    <property type="project" value="InterPro"/>
</dbReference>
<dbReference type="Gene3D" id="3.10.50.40">
    <property type="match status" value="1"/>
</dbReference>
<dbReference type="Gene3D" id="1.10.4030.10">
    <property type="entry name" value="Porin chaperone SurA, peptide-binding domain"/>
    <property type="match status" value="1"/>
</dbReference>
<dbReference type="InterPro" id="IPR046357">
    <property type="entry name" value="PPIase_dom_sf"/>
</dbReference>
<dbReference type="InterPro" id="IPR000297">
    <property type="entry name" value="PPIase_PpiC"/>
</dbReference>
<dbReference type="InterPro" id="IPR023058">
    <property type="entry name" value="PPIase_PpiC_CS"/>
</dbReference>
<dbReference type="InterPro" id="IPR052029">
    <property type="entry name" value="PpiD_chaperone"/>
</dbReference>
<dbReference type="InterPro" id="IPR027304">
    <property type="entry name" value="Trigger_fact/SurA_dom_sf"/>
</dbReference>
<dbReference type="PANTHER" id="PTHR47529">
    <property type="entry name" value="PEPTIDYL-PROLYL CIS-TRANS ISOMERASE D"/>
    <property type="match status" value="1"/>
</dbReference>
<dbReference type="PANTHER" id="PTHR47529:SF1">
    <property type="entry name" value="PERIPLASMIC CHAPERONE PPID"/>
    <property type="match status" value="1"/>
</dbReference>
<dbReference type="Pfam" id="PF13145">
    <property type="entry name" value="Rotamase_2"/>
    <property type="match status" value="1"/>
</dbReference>
<dbReference type="Pfam" id="PF13624">
    <property type="entry name" value="SurA_N_3"/>
    <property type="match status" value="1"/>
</dbReference>
<dbReference type="SUPFAM" id="SSF54534">
    <property type="entry name" value="FKBP-like"/>
    <property type="match status" value="1"/>
</dbReference>
<dbReference type="SUPFAM" id="SSF109998">
    <property type="entry name" value="Triger factor/SurA peptide-binding domain-like"/>
    <property type="match status" value="1"/>
</dbReference>
<dbReference type="PROSITE" id="PS01096">
    <property type="entry name" value="PPIC_PPIASE_1"/>
    <property type="match status" value="1"/>
</dbReference>
<dbReference type="PROSITE" id="PS50198">
    <property type="entry name" value="PPIC_PPIASE_2"/>
    <property type="match status" value="1"/>
</dbReference>
<gene>
    <name type="primary">ppiD</name>
    <name type="ordered locus">HD_1737</name>
</gene>
<keyword id="KW-0997">Cell inner membrane</keyword>
<keyword id="KW-1003">Cell membrane</keyword>
<keyword id="KW-0143">Chaperone</keyword>
<keyword id="KW-0472">Membrane</keyword>
<keyword id="KW-1185">Reference proteome</keyword>
<keyword id="KW-0812">Transmembrane</keyword>
<keyword id="KW-1133">Transmembrane helix</keyword>
<name>PPID_HAEDU</name>
<proteinExistence type="inferred from homology"/>
<evidence type="ECO:0000250" key="1">
    <source>
        <dbReference type="UniProtKB" id="P0ADY1"/>
    </source>
</evidence>
<evidence type="ECO:0000255" key="2"/>
<evidence type="ECO:0000255" key="3">
    <source>
        <dbReference type="PROSITE-ProRule" id="PRU00278"/>
    </source>
</evidence>
<evidence type="ECO:0000305" key="4"/>
<accession>Q7VKX4</accession>
<organism>
    <name type="scientific">Haemophilus ducreyi (strain 35000HP / ATCC 700724)</name>
    <dbReference type="NCBI Taxonomy" id="233412"/>
    <lineage>
        <taxon>Bacteria</taxon>
        <taxon>Pseudomonadati</taxon>
        <taxon>Pseudomonadota</taxon>
        <taxon>Gammaproteobacteria</taxon>
        <taxon>Pasteurellales</taxon>
        <taxon>Pasteurellaceae</taxon>
        <taxon>Haemophilus</taxon>
    </lineage>
</organism>
<reference key="1">
    <citation type="submission" date="2003-06" db="EMBL/GenBank/DDBJ databases">
        <title>The complete genome sequence of Haemophilus ducreyi.</title>
        <authorList>
            <person name="Munson R.S. Jr."/>
            <person name="Ray W.C."/>
            <person name="Mahairas G."/>
            <person name="Sabo P."/>
            <person name="Mungur R."/>
            <person name="Johnson L."/>
            <person name="Nguyen D."/>
            <person name="Wang J."/>
            <person name="Forst C."/>
            <person name="Hood L."/>
        </authorList>
    </citation>
    <scope>NUCLEOTIDE SEQUENCE [LARGE SCALE GENOMIC DNA]</scope>
    <source>
        <strain>35000HP / ATCC 700724</strain>
    </source>
</reference>
<protein>
    <recommendedName>
        <fullName evidence="1">Periplasmic chaperone PpiD</fullName>
    </recommendedName>
    <alternativeName>
        <fullName evidence="1">Periplasmic folding chaperone</fullName>
    </alternativeName>
</protein>
<sequence length="620" mass="69557">MIEKMHERTNSVAFKVIFALVSLSFVLTGIGTGLVGADTSAVKVNGTTIDQHAFNTAKARQQNVLNAQLGERFWDLLDTPEYAKQFNQSVLDGLVNDELMRQYAKDLKLGISANQIKSQIVNSQIFQQDGKFNNELYQHTLRNNGLTADGYAAIVNEGMLLSQIQKGIVESDFSVPVTEALLAKLLLQQRQVRLATYPIAKEIANQTASVEELQKYYDAKKTDLVEPEQLVVEYVTFMPKDIEKNIQVTDEQVATYYEKNKADFVTKGETHLAHIQLANEEKAKQVAEALKQGTDFAMLANDTSTDSLSAQQGGDLGWTKAGIFPEIFEQTANALAINEVSEPVKVDNNYHIIKVLDRKEDVALPFEMVKDKIVKIIRDELLLTEYSNISHEMANKAFENSSSLAEVAQIAGVNVQTSTQFNREHIPADLNNEKVIKALFNGELRQSGQNSDALDVGNEREPKTMFVRVRDFYPERVRTFDEAKADIEQIVKHQKAEQLLLAKAEENVKALNEGNAVNVDFNEAETLVYAKRADNPILFKTVFAMQKPTDKPTYQVTHNQQGDVVIVSLEKVIDGKQEEFAPLASQLKQLDQTLLRNDLLKDLRSRASVDVNQNFIEQLK</sequence>
<feature type="chain" id="PRO_0000193425" description="Periplasmic chaperone PpiD">
    <location>
        <begin position="1"/>
        <end position="620"/>
    </location>
</feature>
<feature type="topological domain" description="Cytoplasmic" evidence="1">
    <location>
        <begin position="1"/>
        <end position="15"/>
    </location>
</feature>
<feature type="transmembrane region" description="Helical" evidence="2">
    <location>
        <begin position="16"/>
        <end position="36"/>
    </location>
</feature>
<feature type="topological domain" description="Periplasmic" evidence="1">
    <location>
        <begin position="37"/>
        <end position="620"/>
    </location>
</feature>
<feature type="domain" description="PpiC" evidence="3">
    <location>
        <begin position="267"/>
        <end position="357"/>
    </location>
</feature>